<keyword id="KW-0210">Decarboxylase</keyword>
<keyword id="KW-0456">Lyase</keyword>
<keyword id="KW-0460">Magnesium</keyword>
<keyword id="KW-0479">Metal-binding</keyword>
<keyword id="KW-0620">Polyamine biosynthesis</keyword>
<keyword id="KW-0663">Pyridoxal phosphate</keyword>
<keyword id="KW-1185">Reference proteome</keyword>
<keyword id="KW-0745">Spermidine biosynthesis</keyword>
<evidence type="ECO:0000255" key="1">
    <source>
        <dbReference type="HAMAP-Rule" id="MF_01417"/>
    </source>
</evidence>
<accession>Q7VEG4</accession>
<organism>
    <name type="scientific">Prochlorococcus marinus (strain SARG / CCMP1375 / SS120)</name>
    <dbReference type="NCBI Taxonomy" id="167539"/>
    <lineage>
        <taxon>Bacteria</taxon>
        <taxon>Bacillati</taxon>
        <taxon>Cyanobacteriota</taxon>
        <taxon>Cyanophyceae</taxon>
        <taxon>Synechococcales</taxon>
        <taxon>Prochlorococcaceae</taxon>
        <taxon>Prochlorococcus</taxon>
    </lineage>
</organism>
<comment type="function">
    <text evidence="1">Catalyzes the biosynthesis of agmatine from arginine.</text>
</comment>
<comment type="catalytic activity">
    <reaction evidence="1">
        <text>L-arginine + H(+) = agmatine + CO2</text>
        <dbReference type="Rhea" id="RHEA:17641"/>
        <dbReference type="ChEBI" id="CHEBI:15378"/>
        <dbReference type="ChEBI" id="CHEBI:16526"/>
        <dbReference type="ChEBI" id="CHEBI:32682"/>
        <dbReference type="ChEBI" id="CHEBI:58145"/>
        <dbReference type="EC" id="4.1.1.19"/>
    </reaction>
</comment>
<comment type="cofactor">
    <cofactor evidence="1">
        <name>Mg(2+)</name>
        <dbReference type="ChEBI" id="CHEBI:18420"/>
    </cofactor>
</comment>
<comment type="cofactor">
    <cofactor evidence="1">
        <name>pyridoxal 5'-phosphate</name>
        <dbReference type="ChEBI" id="CHEBI:597326"/>
    </cofactor>
</comment>
<comment type="similarity">
    <text evidence="1">Belongs to the Orn/Lys/Arg decarboxylase class-II family. SpeA subfamily.</text>
</comment>
<gene>
    <name evidence="1" type="primary">speA</name>
    <name type="ordered locus">Pro_0049</name>
</gene>
<dbReference type="EC" id="4.1.1.19" evidence="1"/>
<dbReference type="EMBL" id="AE017126">
    <property type="protein sequence ID" value="AAP99095.1"/>
    <property type="molecule type" value="Genomic_DNA"/>
</dbReference>
<dbReference type="RefSeq" id="NP_874443.1">
    <property type="nucleotide sequence ID" value="NC_005042.1"/>
</dbReference>
<dbReference type="RefSeq" id="WP_011124204.1">
    <property type="nucleotide sequence ID" value="NC_005042.1"/>
</dbReference>
<dbReference type="SMR" id="Q7VEG4"/>
<dbReference type="STRING" id="167539.Pro_0049"/>
<dbReference type="EnsemblBacteria" id="AAP99095">
    <property type="protein sequence ID" value="AAP99095"/>
    <property type="gene ID" value="Pro_0049"/>
</dbReference>
<dbReference type="KEGG" id="pma:Pro_0049"/>
<dbReference type="PATRIC" id="fig|167539.5.peg.51"/>
<dbReference type="eggNOG" id="COG1166">
    <property type="taxonomic scope" value="Bacteria"/>
</dbReference>
<dbReference type="HOGENOM" id="CLU_027243_1_0_3"/>
<dbReference type="OrthoDB" id="9802658at2"/>
<dbReference type="Proteomes" id="UP000001420">
    <property type="component" value="Chromosome"/>
</dbReference>
<dbReference type="GO" id="GO:0008792">
    <property type="term" value="F:arginine decarboxylase activity"/>
    <property type="evidence" value="ECO:0007669"/>
    <property type="project" value="UniProtKB-UniRule"/>
</dbReference>
<dbReference type="GO" id="GO:0046872">
    <property type="term" value="F:metal ion binding"/>
    <property type="evidence" value="ECO:0007669"/>
    <property type="project" value="UniProtKB-KW"/>
</dbReference>
<dbReference type="GO" id="GO:0006527">
    <property type="term" value="P:arginine catabolic process"/>
    <property type="evidence" value="ECO:0007669"/>
    <property type="project" value="InterPro"/>
</dbReference>
<dbReference type="GO" id="GO:0008295">
    <property type="term" value="P:spermidine biosynthetic process"/>
    <property type="evidence" value="ECO:0007669"/>
    <property type="project" value="UniProtKB-UniRule"/>
</dbReference>
<dbReference type="CDD" id="cd06830">
    <property type="entry name" value="PLPDE_III_ADC"/>
    <property type="match status" value="1"/>
</dbReference>
<dbReference type="Gene3D" id="1.20.58.930">
    <property type="match status" value="1"/>
</dbReference>
<dbReference type="Gene3D" id="3.20.20.10">
    <property type="entry name" value="Alanine racemase"/>
    <property type="match status" value="1"/>
</dbReference>
<dbReference type="Gene3D" id="2.40.37.10">
    <property type="entry name" value="Lyase, Ornithine Decarboxylase, Chain A, domain 1"/>
    <property type="match status" value="1"/>
</dbReference>
<dbReference type="HAMAP" id="MF_01417">
    <property type="entry name" value="SpeA"/>
    <property type="match status" value="1"/>
</dbReference>
<dbReference type="InterPro" id="IPR009006">
    <property type="entry name" value="Ala_racemase/Decarboxylase_C"/>
</dbReference>
<dbReference type="InterPro" id="IPR040634">
    <property type="entry name" value="Arg_decarb_HB"/>
</dbReference>
<dbReference type="InterPro" id="IPR041128">
    <property type="entry name" value="Arg_decarbox_C"/>
</dbReference>
<dbReference type="InterPro" id="IPR002985">
    <property type="entry name" value="Arg_decrbxlase"/>
</dbReference>
<dbReference type="InterPro" id="IPR022657">
    <property type="entry name" value="De-COase2_CS"/>
</dbReference>
<dbReference type="InterPro" id="IPR022644">
    <property type="entry name" value="De-COase2_N"/>
</dbReference>
<dbReference type="InterPro" id="IPR022653">
    <property type="entry name" value="De-COase2_pyr-phos_BS"/>
</dbReference>
<dbReference type="InterPro" id="IPR000183">
    <property type="entry name" value="Orn/DAP/Arg_de-COase"/>
</dbReference>
<dbReference type="InterPro" id="IPR029066">
    <property type="entry name" value="PLP-binding_barrel"/>
</dbReference>
<dbReference type="NCBIfam" id="NF003763">
    <property type="entry name" value="PRK05354.1"/>
    <property type="match status" value="1"/>
</dbReference>
<dbReference type="NCBIfam" id="TIGR01273">
    <property type="entry name" value="speA"/>
    <property type="match status" value="1"/>
</dbReference>
<dbReference type="PANTHER" id="PTHR43295">
    <property type="entry name" value="ARGININE DECARBOXYLASE"/>
    <property type="match status" value="1"/>
</dbReference>
<dbReference type="PANTHER" id="PTHR43295:SF9">
    <property type="entry name" value="BIOSYNTHETIC ARGININE DECARBOXYLASE"/>
    <property type="match status" value="1"/>
</dbReference>
<dbReference type="Pfam" id="PF17810">
    <property type="entry name" value="Arg_decarb_HB"/>
    <property type="match status" value="1"/>
</dbReference>
<dbReference type="Pfam" id="PF17944">
    <property type="entry name" value="Arg_decarbox_C"/>
    <property type="match status" value="1"/>
</dbReference>
<dbReference type="Pfam" id="PF02784">
    <property type="entry name" value="Orn_Arg_deC_N"/>
    <property type="match status" value="1"/>
</dbReference>
<dbReference type="PIRSF" id="PIRSF001336">
    <property type="entry name" value="Arg_decrbxlase"/>
    <property type="match status" value="1"/>
</dbReference>
<dbReference type="PRINTS" id="PR01180">
    <property type="entry name" value="ARGDCRBXLASE"/>
</dbReference>
<dbReference type="PRINTS" id="PR01179">
    <property type="entry name" value="ODADCRBXLASE"/>
</dbReference>
<dbReference type="SUPFAM" id="SSF50621">
    <property type="entry name" value="Alanine racemase C-terminal domain-like"/>
    <property type="match status" value="1"/>
</dbReference>
<dbReference type="SUPFAM" id="SSF51419">
    <property type="entry name" value="PLP-binding barrel"/>
    <property type="match status" value="1"/>
</dbReference>
<dbReference type="PROSITE" id="PS00878">
    <property type="entry name" value="ODR_DC_2_1"/>
    <property type="match status" value="1"/>
</dbReference>
<dbReference type="PROSITE" id="PS00879">
    <property type="entry name" value="ODR_DC_2_2"/>
    <property type="match status" value="1"/>
</dbReference>
<reference key="1">
    <citation type="journal article" date="2003" name="Proc. Natl. Acad. Sci. U.S.A.">
        <title>Genome sequence of the cyanobacterium Prochlorococcus marinus SS120, a nearly minimal oxyphototrophic genome.</title>
        <authorList>
            <person name="Dufresne A."/>
            <person name="Salanoubat M."/>
            <person name="Partensky F."/>
            <person name="Artiguenave F."/>
            <person name="Axmann I.M."/>
            <person name="Barbe V."/>
            <person name="Duprat S."/>
            <person name="Galperin M.Y."/>
            <person name="Koonin E.V."/>
            <person name="Le Gall F."/>
            <person name="Makarova K.S."/>
            <person name="Ostrowski M."/>
            <person name="Oztas S."/>
            <person name="Robert C."/>
            <person name="Rogozin I.B."/>
            <person name="Scanlan D.J."/>
            <person name="Tandeau de Marsac N."/>
            <person name="Weissenbach J."/>
            <person name="Wincker P."/>
            <person name="Wolf Y.I."/>
            <person name="Hess W.R."/>
        </authorList>
    </citation>
    <scope>NUCLEOTIDE SEQUENCE [LARGE SCALE GENOMIC DNA]</scope>
    <source>
        <strain>SARG / CCMP1375 / SS120</strain>
    </source>
</reference>
<protein>
    <recommendedName>
        <fullName evidence="1">Biosynthetic arginine decarboxylase</fullName>
        <shortName evidence="1">ADC</shortName>
        <ecNumber evidence="1">4.1.1.19</ecNumber>
    </recommendedName>
</protein>
<feature type="chain" id="PRO_0000149968" description="Biosynthetic arginine decarboxylase">
    <location>
        <begin position="1"/>
        <end position="648"/>
    </location>
</feature>
<feature type="binding site" evidence="1">
    <location>
        <begin position="291"/>
        <end position="301"/>
    </location>
    <ligand>
        <name>substrate</name>
    </ligand>
</feature>
<feature type="modified residue" description="N6-(pyridoxal phosphate)lysine" evidence="1">
    <location>
        <position position="109"/>
    </location>
</feature>
<name>SPEA_PROMA</name>
<proteinExistence type="inferred from homology"/>
<sequence length="648" mass="72378">MTKSKPATKKNEWTVKDSCSLYGLDLWGEEYFSINDSGNVTVSPQGKEGNSLELTHLLEELKGRNLNTPLLLRFDDILEDRLKKLHQAFENAINQYGYNNDYQGVFPIKCNQQRHVVEEIVTIGRKWHFGLEAGSKAELLIALALVNDPKAFLICNGYKDNRYIETTILARQLGRQPIVVIEQSDEVGRIIKASQKLGAAPLIGIRAKLSNQSSGRWGNSVGEKSKFGLSIPEILKAVQELTAAGLLNELILLHFHVGSQINDIAILKNALQEASQIYVELNRLGAPMGHLDVGGGLGVDYDGSRTATSASTNYSLQNYANDVVATIQECCKAKKVKVPKLISESGRFLSSHFSILIFNVLGTSSVPTQIAIETSNECLSVKNLRETLMILHQICEEKKIDVSKLQEAWNDALKFKEDALNAFRLGFIDLTERATAEQLTWACAKQIAAHLPNDLKIPKELLAINKGLTETYYANISIFRSAPDTWAIQQLFPLLPIHRLQEKPDQLGHFADLTCDSDGKLARFINNGQEKFLLELHTVKANENYWIGMFLGGAYQEVMGNLHNLFGSTNAIHIRLTKNGKYKLDHVVRGNSKSDVLQAMEHDSEQLLERIRMASESAIQQGSLKINDAQRLIEHVETSLRQSTYLQE</sequence>